<sequence length="103" mass="10951">AAFALPAFASFEKDVITPAALEAVLNRKAPLSNIMMENDAILNVIANVKTVISNPVLEEALLKTNHGVNGIPCGESCVWIPCLTSTVGCSCKSKVCYRNSLDN</sequence>
<evidence type="ECO:0000250" key="1">
    <source>
        <dbReference type="UniProtKB" id="P56871"/>
    </source>
</evidence>
<evidence type="ECO:0000250" key="2">
    <source>
        <dbReference type="UniProtKB" id="Q5USN8"/>
    </source>
</evidence>
<evidence type="ECO:0000255" key="3">
    <source>
        <dbReference type="PROSITE-ProRule" id="PRU00395"/>
    </source>
</evidence>
<evidence type="ECO:0000269" key="4">
    <source>
    </source>
</evidence>
<evidence type="ECO:0000305" key="5"/>
<evidence type="ECO:0000312" key="6">
    <source>
        <dbReference type="EMBL" id="ABW08091.1"/>
    </source>
</evidence>
<feature type="signal peptide" evidence="2">
    <location>
        <begin position="1" status="less than"/>
        <end position="9"/>
    </location>
</feature>
<feature type="propeptide" id="PRO_0000341431" evidence="2">
    <location>
        <begin position="10"/>
        <end position="69"/>
    </location>
</feature>
<feature type="peptide" id="PRO_0000341432" description="Cyclotide vibi-I" evidence="3">
    <location>
        <begin position="70"/>
        <end position="99"/>
    </location>
</feature>
<feature type="propeptide" id="PRO_0000341433" evidence="2">
    <location>
        <begin position="100"/>
        <end position="103"/>
    </location>
</feature>
<feature type="disulfide bond" evidence="1 3">
    <location>
        <begin position="73"/>
        <end position="89"/>
    </location>
</feature>
<feature type="disulfide bond" evidence="1 3">
    <location>
        <begin position="77"/>
        <end position="91"/>
    </location>
</feature>
<feature type="disulfide bond" evidence="1 3">
    <location>
        <begin position="82"/>
        <end position="96"/>
    </location>
</feature>
<feature type="cross-link" description="Cyclopeptide (Gly-Asn)" evidence="2">
    <location>
        <begin position="70"/>
        <end position="99"/>
    </location>
</feature>
<feature type="non-terminal residue" evidence="6">
    <location>
        <position position="1"/>
    </location>
</feature>
<organism>
    <name type="scientific">Viola biflora</name>
    <name type="common">Yellow wood violet</name>
    <dbReference type="NCBI Taxonomy" id="214529"/>
    <lineage>
        <taxon>Eukaryota</taxon>
        <taxon>Viridiplantae</taxon>
        <taxon>Streptophyta</taxon>
        <taxon>Embryophyta</taxon>
        <taxon>Tracheophyta</taxon>
        <taxon>Spermatophyta</taxon>
        <taxon>Magnoliopsida</taxon>
        <taxon>eudicotyledons</taxon>
        <taxon>Gunneridae</taxon>
        <taxon>Pentapetalae</taxon>
        <taxon>rosids</taxon>
        <taxon>fabids</taxon>
        <taxon>Malpighiales</taxon>
        <taxon>Violaceae</taxon>
        <taxon>Viola</taxon>
        <taxon>Viola subgen. Viola</taxon>
        <taxon>Viola sect. Chamaemelanium</taxon>
    </lineage>
</organism>
<reference evidence="5 6" key="1">
    <citation type="journal article" date="2008" name="Phytochemistry">
        <title>The alpine violet, Viola biflora, is a rich source of cyclotides with potent cytotoxicity.</title>
        <authorList>
            <person name="Herrmann A."/>
            <person name="Burman R."/>
            <person name="Mylne J.S."/>
            <person name="Karlsson G."/>
            <person name="Gullbo J."/>
            <person name="Craik D.J."/>
            <person name="Clark R.J."/>
            <person name="Goeransson U."/>
        </authorList>
    </citation>
    <scope>NUCLEOTIDE SEQUENCE [MRNA]</scope>
    <scope>MASS SPECTROMETRY</scope>
    <source>
        <tissue evidence="4">Leaf</tissue>
    </source>
</reference>
<dbReference type="EMBL" id="EU046619">
    <property type="protein sequence ID" value="ABW08091.1"/>
    <property type="molecule type" value="mRNA"/>
</dbReference>
<dbReference type="SMR" id="B1NRQ9"/>
<dbReference type="GO" id="GO:0006952">
    <property type="term" value="P:defense response"/>
    <property type="evidence" value="ECO:0007669"/>
    <property type="project" value="UniProtKB-KW"/>
</dbReference>
<dbReference type="InterPro" id="IPR005535">
    <property type="entry name" value="Cyclotide"/>
</dbReference>
<dbReference type="InterPro" id="IPR012323">
    <property type="entry name" value="Cyclotide_bracelet_CS"/>
</dbReference>
<dbReference type="InterPro" id="IPR036146">
    <property type="entry name" value="Cyclotide_sf"/>
</dbReference>
<dbReference type="Pfam" id="PF03784">
    <property type="entry name" value="Cyclotide"/>
    <property type="match status" value="1"/>
</dbReference>
<dbReference type="SUPFAM" id="SSF57038">
    <property type="entry name" value="Cyclotides"/>
    <property type="match status" value="1"/>
</dbReference>
<dbReference type="PROSITE" id="PS51052">
    <property type="entry name" value="CYCLOTIDE"/>
    <property type="match status" value="1"/>
</dbReference>
<dbReference type="PROSITE" id="PS60008">
    <property type="entry name" value="CYCLOTIDE_BRACELET"/>
    <property type="match status" value="1"/>
</dbReference>
<accession>B1NRQ9</accession>
<name>CYVI_VIOBI</name>
<proteinExistence type="evidence at protein level"/>
<comment type="function">
    <text evidence="5">Probably participates in a plant defense mechanism.</text>
</comment>
<comment type="domain">
    <text evidence="1">The presence of a 'disulfide through disulfide knot' structurally defines this protein as a knottin.</text>
</comment>
<comment type="PTM">
    <text evidence="5">This is a cyclic peptide.</text>
</comment>
<comment type="mass spectrometry" mass="3170.0" method="Electrospray" evidence="4"/>
<comment type="similarity">
    <text evidence="3">Belongs to the cyclotide family. Bracelet subfamily.</text>
</comment>
<protein>
    <recommendedName>
        <fullName>Cyclotide vibi-I</fullName>
    </recommendedName>
    <alternativeName>
        <fullName>Vbc2</fullName>
    </alternativeName>
</protein>
<keyword id="KW-1015">Disulfide bond</keyword>
<keyword id="KW-0960">Knottin</keyword>
<keyword id="KW-0611">Plant defense</keyword>
<keyword id="KW-0732">Signal</keyword>